<accession>B1KU02</accession>
<organism>
    <name type="scientific">Clostridium botulinum (strain Loch Maree / Type A3)</name>
    <dbReference type="NCBI Taxonomy" id="498214"/>
    <lineage>
        <taxon>Bacteria</taxon>
        <taxon>Bacillati</taxon>
        <taxon>Bacillota</taxon>
        <taxon>Clostridia</taxon>
        <taxon>Eubacteriales</taxon>
        <taxon>Clostridiaceae</taxon>
        <taxon>Clostridium</taxon>
    </lineage>
</organism>
<protein>
    <recommendedName>
        <fullName evidence="1">Peptide methionine sulfoxide reductase MsrA</fullName>
        <shortName evidence="1">Protein-methionine-S-oxide reductase</shortName>
        <ecNumber evidence="1">1.8.4.11</ecNumber>
    </recommendedName>
    <alternativeName>
        <fullName evidence="1">Peptide-methionine (S)-S-oxide reductase</fullName>
        <shortName evidence="1">Peptide Met(O) reductase</shortName>
    </alternativeName>
</protein>
<gene>
    <name evidence="1" type="primary">msrA</name>
    <name type="ordered locus">CLK_1379</name>
</gene>
<sequence length="157" mass="18183">MKEIVLAGGCFWGVEEYISRIQGIVKTKVGYANGTKENPSYEEVCSGVTRHAEACYIKYDESIISLEELLNKFWSIIDPTVLNKQGNDRGTQYRTGIFYLDEKDLNLIIKSKSQEKKNYRKPIVTEVEPLKCFYEAEEYHQKYLKKNPGGYCHIHLD</sequence>
<proteinExistence type="inferred from homology"/>
<evidence type="ECO:0000255" key="1">
    <source>
        <dbReference type="HAMAP-Rule" id="MF_01401"/>
    </source>
</evidence>
<reference key="1">
    <citation type="journal article" date="2007" name="PLoS ONE">
        <title>Analysis of the neurotoxin complex genes in Clostridium botulinum A1-A4 and B1 strains: BoNT/A3, /Ba4 and /B1 clusters are located within plasmids.</title>
        <authorList>
            <person name="Smith T.J."/>
            <person name="Hill K.K."/>
            <person name="Foley B.T."/>
            <person name="Detter J.C."/>
            <person name="Munk A.C."/>
            <person name="Bruce D.C."/>
            <person name="Doggett N.A."/>
            <person name="Smith L.A."/>
            <person name="Marks J.D."/>
            <person name="Xie G."/>
            <person name="Brettin T.S."/>
        </authorList>
    </citation>
    <scope>NUCLEOTIDE SEQUENCE [LARGE SCALE GENOMIC DNA]</scope>
    <source>
        <strain>Loch Maree / Type A3</strain>
    </source>
</reference>
<feature type="chain" id="PRO_1000145396" description="Peptide methionine sulfoxide reductase MsrA">
    <location>
        <begin position="1"/>
        <end position="157"/>
    </location>
</feature>
<feature type="active site" evidence="1">
    <location>
        <position position="10"/>
    </location>
</feature>
<name>MSRA_CLOBM</name>
<comment type="function">
    <text evidence="1">Has an important function as a repair enzyme for proteins that have been inactivated by oxidation. Catalyzes the reversible oxidation-reduction of methionine sulfoxide in proteins to methionine.</text>
</comment>
<comment type="catalytic activity">
    <reaction evidence="1">
        <text>L-methionyl-[protein] + [thioredoxin]-disulfide + H2O = L-methionyl-(S)-S-oxide-[protein] + [thioredoxin]-dithiol</text>
        <dbReference type="Rhea" id="RHEA:14217"/>
        <dbReference type="Rhea" id="RHEA-COMP:10698"/>
        <dbReference type="Rhea" id="RHEA-COMP:10700"/>
        <dbReference type="Rhea" id="RHEA-COMP:12313"/>
        <dbReference type="Rhea" id="RHEA-COMP:12315"/>
        <dbReference type="ChEBI" id="CHEBI:15377"/>
        <dbReference type="ChEBI" id="CHEBI:16044"/>
        <dbReference type="ChEBI" id="CHEBI:29950"/>
        <dbReference type="ChEBI" id="CHEBI:44120"/>
        <dbReference type="ChEBI" id="CHEBI:50058"/>
        <dbReference type="EC" id="1.8.4.11"/>
    </reaction>
</comment>
<comment type="catalytic activity">
    <reaction evidence="1">
        <text>[thioredoxin]-disulfide + L-methionine + H2O = L-methionine (S)-S-oxide + [thioredoxin]-dithiol</text>
        <dbReference type="Rhea" id="RHEA:19993"/>
        <dbReference type="Rhea" id="RHEA-COMP:10698"/>
        <dbReference type="Rhea" id="RHEA-COMP:10700"/>
        <dbReference type="ChEBI" id="CHEBI:15377"/>
        <dbReference type="ChEBI" id="CHEBI:29950"/>
        <dbReference type="ChEBI" id="CHEBI:50058"/>
        <dbReference type="ChEBI" id="CHEBI:57844"/>
        <dbReference type="ChEBI" id="CHEBI:58772"/>
        <dbReference type="EC" id="1.8.4.11"/>
    </reaction>
</comment>
<comment type="similarity">
    <text evidence="1">Belongs to the MsrA Met sulfoxide reductase family.</text>
</comment>
<keyword id="KW-0560">Oxidoreductase</keyword>
<dbReference type="EC" id="1.8.4.11" evidence="1"/>
<dbReference type="EMBL" id="CP000962">
    <property type="protein sequence ID" value="ACA54834.1"/>
    <property type="molecule type" value="Genomic_DNA"/>
</dbReference>
<dbReference type="RefSeq" id="WP_012342886.1">
    <property type="nucleotide sequence ID" value="NC_010520.1"/>
</dbReference>
<dbReference type="SMR" id="B1KU02"/>
<dbReference type="KEGG" id="cbl:CLK_1379"/>
<dbReference type="HOGENOM" id="CLU_031040_10_2_9"/>
<dbReference type="GO" id="GO:0005737">
    <property type="term" value="C:cytoplasm"/>
    <property type="evidence" value="ECO:0007669"/>
    <property type="project" value="TreeGrafter"/>
</dbReference>
<dbReference type="GO" id="GO:0036456">
    <property type="term" value="F:L-methionine-(S)-S-oxide reductase activity"/>
    <property type="evidence" value="ECO:0007669"/>
    <property type="project" value="TreeGrafter"/>
</dbReference>
<dbReference type="GO" id="GO:0008113">
    <property type="term" value="F:peptide-methionine (S)-S-oxide reductase activity"/>
    <property type="evidence" value="ECO:0007669"/>
    <property type="project" value="UniProtKB-UniRule"/>
</dbReference>
<dbReference type="GO" id="GO:0034599">
    <property type="term" value="P:cellular response to oxidative stress"/>
    <property type="evidence" value="ECO:0007669"/>
    <property type="project" value="TreeGrafter"/>
</dbReference>
<dbReference type="GO" id="GO:0036211">
    <property type="term" value="P:protein modification process"/>
    <property type="evidence" value="ECO:0007669"/>
    <property type="project" value="UniProtKB-UniRule"/>
</dbReference>
<dbReference type="FunFam" id="3.30.1060.10:FF:000010">
    <property type="entry name" value="Peptide methionine sulfoxide reductase msrA"/>
    <property type="match status" value="1"/>
</dbReference>
<dbReference type="Gene3D" id="3.30.1060.10">
    <property type="entry name" value="Peptide methionine sulphoxide reductase MsrA"/>
    <property type="match status" value="1"/>
</dbReference>
<dbReference type="HAMAP" id="MF_01401">
    <property type="entry name" value="MsrA"/>
    <property type="match status" value="1"/>
</dbReference>
<dbReference type="InterPro" id="IPR002569">
    <property type="entry name" value="Met_Sox_Rdtase_MsrA_dom"/>
</dbReference>
<dbReference type="InterPro" id="IPR036509">
    <property type="entry name" value="Met_Sox_Rdtase_MsrA_sf"/>
</dbReference>
<dbReference type="InterPro" id="IPR050162">
    <property type="entry name" value="MsrA_MetSO_reductase"/>
</dbReference>
<dbReference type="NCBIfam" id="TIGR00401">
    <property type="entry name" value="msrA"/>
    <property type="match status" value="1"/>
</dbReference>
<dbReference type="PANTHER" id="PTHR42799">
    <property type="entry name" value="MITOCHONDRIAL PEPTIDE METHIONINE SULFOXIDE REDUCTASE"/>
    <property type="match status" value="1"/>
</dbReference>
<dbReference type="PANTHER" id="PTHR42799:SF2">
    <property type="entry name" value="MITOCHONDRIAL PEPTIDE METHIONINE SULFOXIDE REDUCTASE"/>
    <property type="match status" value="1"/>
</dbReference>
<dbReference type="Pfam" id="PF01625">
    <property type="entry name" value="PMSR"/>
    <property type="match status" value="1"/>
</dbReference>
<dbReference type="SUPFAM" id="SSF55068">
    <property type="entry name" value="Peptide methionine sulfoxide reductase"/>
    <property type="match status" value="1"/>
</dbReference>